<feature type="chain" id="PRO_0000314833" description="Plasma membrane ascorbate-dependent reductase CYBRD1">
    <location>
        <begin position="1"/>
        <end position="286"/>
    </location>
</feature>
<feature type="topological domain" description="Cytoplasmic" evidence="1">
    <location>
        <begin position="1"/>
        <end position="7"/>
    </location>
</feature>
<feature type="transmembrane region" description="Helical; Name=1" evidence="1">
    <location>
        <begin position="8"/>
        <end position="32"/>
    </location>
</feature>
<feature type="topological domain" description="Extracellular" evidence="1">
    <location>
        <begin position="33"/>
        <end position="47"/>
    </location>
</feature>
<feature type="transmembrane region" description="Helical; Name=2" evidence="1">
    <location>
        <begin position="48"/>
        <end position="69"/>
    </location>
</feature>
<feature type="topological domain" description="Cytoplasmic" evidence="1">
    <location>
        <begin position="70"/>
        <end position="78"/>
    </location>
</feature>
<feature type="transmembrane region" description="Helical; Name=3" evidence="1">
    <location>
        <begin position="79"/>
        <end position="105"/>
    </location>
</feature>
<feature type="topological domain" description="Extracellular" evidence="1">
    <location>
        <begin position="106"/>
        <end position="118"/>
    </location>
</feature>
<feature type="transmembrane region" description="Helical; Name=4" evidence="1">
    <location>
        <begin position="119"/>
        <end position="144"/>
    </location>
</feature>
<feature type="topological domain" description="Cytoplasmic" evidence="1">
    <location>
        <begin position="145"/>
        <end position="151"/>
    </location>
</feature>
<feature type="transmembrane region" description="Helical; Name=5" evidence="1">
    <location>
        <begin position="152"/>
        <end position="179"/>
    </location>
</feature>
<feature type="topological domain" description="Extracellular" evidence="1">
    <location>
        <begin position="180"/>
        <end position="197"/>
    </location>
</feature>
<feature type="transmembrane region" description="Helical; Name=6" evidence="1">
    <location>
        <begin position="198"/>
        <end position="222"/>
    </location>
</feature>
<feature type="topological domain" description="Cytoplasmic" evidence="1">
    <location>
        <begin position="223"/>
        <end position="286"/>
    </location>
</feature>
<feature type="domain" description="Cytochrome b561" evidence="3">
    <location>
        <begin position="15"/>
        <end position="220"/>
    </location>
</feature>
<feature type="binding site" description="axial binding residue" evidence="1">
    <location>
        <position position="50"/>
    </location>
    <ligand>
        <name>heme b</name>
        <dbReference type="ChEBI" id="CHEBI:60344"/>
        <label>1</label>
    </ligand>
    <ligandPart>
        <name>Fe</name>
        <dbReference type="ChEBI" id="CHEBI:18248"/>
    </ligandPart>
</feature>
<feature type="binding site" evidence="1">
    <location>
        <position position="70"/>
    </location>
    <ligand>
        <name>heme b</name>
        <dbReference type="ChEBI" id="CHEBI:60344"/>
        <label>2</label>
    </ligand>
</feature>
<feature type="binding site" evidence="1">
    <location>
        <position position="79"/>
    </location>
    <ligand>
        <name>heme b</name>
        <dbReference type="ChEBI" id="CHEBI:60344"/>
        <label>2</label>
    </ligand>
</feature>
<feature type="binding site" evidence="1">
    <location>
        <position position="79"/>
    </location>
    <ligand>
        <name>L-ascorbate</name>
        <dbReference type="ChEBI" id="CHEBI:38290"/>
    </ligand>
</feature>
<feature type="binding site" evidence="1">
    <location>
        <position position="83"/>
    </location>
    <ligand>
        <name>L-ascorbate</name>
        <dbReference type="ChEBI" id="CHEBI:38290"/>
    </ligand>
</feature>
<feature type="binding site" description="axial binding residue" evidence="1">
    <location>
        <position position="86"/>
    </location>
    <ligand>
        <name>heme b</name>
        <dbReference type="ChEBI" id="CHEBI:60344"/>
        <label>2</label>
    </ligand>
    <ligandPart>
        <name>Fe</name>
        <dbReference type="ChEBI" id="CHEBI:18248"/>
    </ligandPart>
</feature>
<feature type="binding site" evidence="1">
    <location>
        <position position="108"/>
    </location>
    <ligand>
        <name>Fe(3+)</name>
        <dbReference type="ChEBI" id="CHEBI:29034"/>
        <note>substrate</note>
    </ligand>
</feature>
<feature type="binding site" evidence="1">
    <location>
        <begin position="115"/>
        <end position="118"/>
    </location>
    <ligand>
        <name>heme b</name>
        <dbReference type="ChEBI" id="CHEBI:60344"/>
        <label>1</label>
    </ligand>
</feature>
<feature type="binding site" description="axial binding residue" evidence="1">
    <location>
        <position position="120"/>
    </location>
    <ligand>
        <name>heme b</name>
        <dbReference type="ChEBI" id="CHEBI:60344"/>
        <label>1</label>
    </ligand>
    <ligandPart>
        <name>Fe</name>
        <dbReference type="ChEBI" id="CHEBI:18248"/>
    </ligandPart>
</feature>
<feature type="binding site" evidence="1">
    <location>
        <position position="152"/>
    </location>
    <ligand>
        <name>L-ascorbate</name>
        <dbReference type="ChEBI" id="CHEBI:38290"/>
    </ligand>
</feature>
<feature type="binding site" description="axial binding residue" evidence="1">
    <location>
        <position position="159"/>
    </location>
    <ligand>
        <name>heme b</name>
        <dbReference type="ChEBI" id="CHEBI:60344"/>
        <label>2</label>
    </ligand>
    <ligandPart>
        <name>Fe</name>
        <dbReference type="ChEBI" id="CHEBI:18248"/>
    </ligandPart>
</feature>
<feature type="binding site" evidence="1">
    <location>
        <position position="180"/>
    </location>
    <ligand>
        <name>heme b</name>
        <dbReference type="ChEBI" id="CHEBI:60344"/>
        <label>1</label>
    </ligand>
</feature>
<feature type="binding site" evidence="1">
    <location>
        <position position="225"/>
    </location>
    <ligand>
        <name>heme b</name>
        <dbReference type="ChEBI" id="CHEBI:60344"/>
        <label>2</label>
    </ligand>
</feature>
<feature type="modified residue" description="Phosphoserine" evidence="1">
    <location>
        <position position="232"/>
    </location>
</feature>
<feature type="modified residue" description="Phosphothreonine" evidence="1">
    <location>
        <position position="285"/>
    </location>
</feature>
<protein>
    <recommendedName>
        <fullName evidence="1">Plasma membrane ascorbate-dependent reductase CYBRD1</fullName>
        <ecNumber evidence="1">7.2.1.3</ecNumber>
    </recommendedName>
    <alternativeName>
        <fullName>Cytochrome b reductase 1</fullName>
    </alternativeName>
    <alternativeName>
        <fullName evidence="6">Duodenal cytochrome b</fullName>
    </alternativeName>
</protein>
<proteinExistence type="evidence at protein level"/>
<accession>Q5RKJ2</accession>
<reference key="1">
    <citation type="journal article" date="2004" name="Genome Res.">
        <title>The status, quality, and expansion of the NIH full-length cDNA project: the Mammalian Gene Collection (MGC).</title>
        <authorList>
            <consortium name="The MGC Project Team"/>
        </authorList>
    </citation>
    <scope>NUCLEOTIDE SEQUENCE [LARGE SCALE MRNA]</scope>
    <source>
        <tissue>Kidney</tissue>
    </source>
</reference>
<reference key="2">
    <citation type="journal article" date="2006" name="Am. J. Physiol.">
        <title>Duodenal cytochrome b: a novel ferrireductase in airway epithelial cells.</title>
        <authorList>
            <person name="Turi J.L."/>
            <person name="Wang X."/>
            <person name="McKie A.T."/>
            <person name="Nozik-Grayck E."/>
            <person name="Mamo L.B."/>
            <person name="Crissman K."/>
            <person name="Piantadosi C.A."/>
            <person name="Ghio A.J."/>
        </authorList>
    </citation>
    <scope>TISSUE SPECIFICITY</scope>
</reference>
<reference key="3">
    <citation type="journal article" date="2007" name="Am. J. Physiol.">
        <title>Elevated iron absorption in the neonatal rat reflects high expression of iron transport genes in the distal alimentary tract.</title>
        <authorList>
            <person name="Frazer D.M."/>
            <person name="Wilkins S.J."/>
            <person name="Anderson G.J."/>
        </authorList>
    </citation>
    <scope>TISSUE SPECIFICITY</scope>
</reference>
<reference key="4">
    <citation type="journal article" date="2012" name="Nat. Commun.">
        <title>Quantitative maps of protein phosphorylation sites across 14 different rat organs and tissues.</title>
        <authorList>
            <person name="Lundby A."/>
            <person name="Secher A."/>
            <person name="Lage K."/>
            <person name="Nordsborg N.B."/>
            <person name="Dmytriyev A."/>
            <person name="Lundby C."/>
            <person name="Olsen J.V."/>
        </authorList>
    </citation>
    <scope>IDENTIFICATION BY MASS SPECTROMETRY [LARGE SCALE ANALYSIS]</scope>
</reference>
<keyword id="KW-1003">Cell membrane</keyword>
<keyword id="KW-0249">Electron transport</keyword>
<keyword id="KW-0349">Heme</keyword>
<keyword id="KW-0408">Iron</keyword>
<keyword id="KW-0472">Membrane</keyword>
<keyword id="KW-0479">Metal-binding</keyword>
<keyword id="KW-0560">Oxidoreductase</keyword>
<keyword id="KW-0597">Phosphoprotein</keyword>
<keyword id="KW-1185">Reference proteome</keyword>
<keyword id="KW-1278">Translocase</keyword>
<keyword id="KW-0812">Transmembrane</keyword>
<keyword id="KW-1133">Transmembrane helix</keyword>
<keyword id="KW-0813">Transport</keyword>
<name>CYBR1_RAT</name>
<organism>
    <name type="scientific">Rattus norvegicus</name>
    <name type="common">Rat</name>
    <dbReference type="NCBI Taxonomy" id="10116"/>
    <lineage>
        <taxon>Eukaryota</taxon>
        <taxon>Metazoa</taxon>
        <taxon>Chordata</taxon>
        <taxon>Craniata</taxon>
        <taxon>Vertebrata</taxon>
        <taxon>Euteleostomi</taxon>
        <taxon>Mammalia</taxon>
        <taxon>Eutheria</taxon>
        <taxon>Euarchontoglires</taxon>
        <taxon>Glires</taxon>
        <taxon>Rodentia</taxon>
        <taxon>Myomorpha</taxon>
        <taxon>Muroidea</taxon>
        <taxon>Muridae</taxon>
        <taxon>Murinae</taxon>
        <taxon>Rattus</taxon>
    </lineage>
</organism>
<evidence type="ECO:0000250" key="1">
    <source>
        <dbReference type="UniProtKB" id="Q53TN4"/>
    </source>
</evidence>
<evidence type="ECO:0000250" key="2">
    <source>
        <dbReference type="UniProtKB" id="Q925G2"/>
    </source>
</evidence>
<evidence type="ECO:0000255" key="3">
    <source>
        <dbReference type="PROSITE-ProRule" id="PRU00242"/>
    </source>
</evidence>
<evidence type="ECO:0000269" key="4">
    <source>
    </source>
</evidence>
<evidence type="ECO:0000269" key="5">
    <source>
    </source>
</evidence>
<evidence type="ECO:0000303" key="6">
    <source>
    </source>
</evidence>
<evidence type="ECO:0000312" key="7">
    <source>
        <dbReference type="RGD" id="1305740"/>
    </source>
</evidence>
<sequence length="286" mass="31519">MAMEGYRGFLGLLVSALLVGFLSVIFVLIWVLHFREGLGWDGGALEFNWHPVLAVTGFVFIQGIAIIVYRLPWTWKCSKFLMKSIHAGLNAVAAILAIISVVAVFDYHNVRKIPHMYSLHSWVGLTVLILYIQQLVVGFFIFLLPWAPPSLRAIVMPIHVYSGLLLFGTVIATVLMGVTEKLFFVLKNPSYHSFPPEGVFTNTLGLLILVFGALIFWIVTRPQWKRPREPGSIPLQLNGGNADGMEGAIAISSAHNMDAADAELSSEGAARKRTLGLVDTGQRSTM</sequence>
<comment type="function">
    <text evidence="1 2">Plasma membrane reductase that uses cytoplasmic ascorbate as an electron donor to reduce extracellular Fe(3+) into Fe(2+). Probably functions in dietary iron absorption at the brush border of duodenal enterocytes by producing Fe(2+), the divalent form of iron that can be transported into enterocytes. It is also able to reduce extracellular monodehydro-L-ascorbate and may be involved in extracellular ascorbate regeneration by erythrocytes in blood. May also act as a ferrireductase in airway epithelial cells (By similarity). May also function as a cupric transmembrane reductase (By similarity).</text>
</comment>
<comment type="catalytic activity">
    <reaction evidence="1">
        <text>Fe(3+)(out) + L-ascorbate(in) = monodehydro-L-ascorbate radical(in) + Fe(2+)(out) + H(+)</text>
        <dbReference type="Rhea" id="RHEA:30403"/>
        <dbReference type="ChEBI" id="CHEBI:15378"/>
        <dbReference type="ChEBI" id="CHEBI:29033"/>
        <dbReference type="ChEBI" id="CHEBI:29034"/>
        <dbReference type="ChEBI" id="CHEBI:38290"/>
        <dbReference type="ChEBI" id="CHEBI:59513"/>
        <dbReference type="EC" id="7.2.1.3"/>
    </reaction>
    <physiologicalReaction direction="left-to-right" evidence="1">
        <dbReference type="Rhea" id="RHEA:30404"/>
    </physiologicalReaction>
</comment>
<comment type="catalytic activity">
    <reaction evidence="2">
        <text>Cu(2+)(out) + L-ascorbate(in) = Cu(+)(out) + monodehydro-L-ascorbate radical(in) + H(+)</text>
        <dbReference type="Rhea" id="RHEA:66656"/>
        <dbReference type="ChEBI" id="CHEBI:15378"/>
        <dbReference type="ChEBI" id="CHEBI:29036"/>
        <dbReference type="ChEBI" id="CHEBI:38290"/>
        <dbReference type="ChEBI" id="CHEBI:49552"/>
        <dbReference type="ChEBI" id="CHEBI:59513"/>
    </reaction>
    <physiologicalReaction direction="left-to-right" evidence="2">
        <dbReference type="Rhea" id="RHEA:66657"/>
    </physiologicalReaction>
</comment>
<comment type="catalytic activity">
    <reaction evidence="1">
        <text>monodehydro-L-ascorbate radical(out) + L-ascorbate(in) = monodehydro-L-ascorbate radical(in) + L-ascorbate(out)</text>
        <dbReference type="Rhea" id="RHEA:66524"/>
        <dbReference type="ChEBI" id="CHEBI:38290"/>
        <dbReference type="ChEBI" id="CHEBI:59513"/>
    </reaction>
    <physiologicalReaction direction="left-to-right" evidence="1">
        <dbReference type="Rhea" id="RHEA:66525"/>
    </physiologicalReaction>
</comment>
<comment type="cofactor">
    <cofactor evidence="1">
        <name>heme b</name>
        <dbReference type="ChEBI" id="CHEBI:60344"/>
    </cofactor>
    <text evidence="1">Binds 2 heme b groups non-covalently.</text>
</comment>
<comment type="subunit">
    <text evidence="1">Homodimer.</text>
</comment>
<comment type="subcellular location">
    <subcellularLocation>
        <location evidence="1">Cell membrane</location>
        <topology evidence="1">Multi-pass membrane protein</topology>
    </subcellularLocation>
    <subcellularLocation>
        <location evidence="1">Apical cell membrane</location>
        <topology evidence="1">Multi-pass membrane protein</topology>
    </subcellularLocation>
    <text evidence="1">Localized at the brush border of duodenal cells.</text>
</comment>
<comment type="tissue specificity">
    <text evidence="4 5">Highly expressed in all regions of the small intestine and colon studied in suckling animals. However, after weaning, when iron absorption declines significantly, strong expression is retained only in the duodenum. Also expressed in respiratory epithelium.</text>
</comment>
<gene>
    <name evidence="7" type="primary">Cybrd1</name>
    <name evidence="6" type="synonym">Dcytb</name>
</gene>
<dbReference type="EC" id="7.2.1.3" evidence="1"/>
<dbReference type="EMBL" id="BC085768">
    <property type="protein sequence ID" value="AAH85768.1"/>
    <property type="molecule type" value="mRNA"/>
</dbReference>
<dbReference type="RefSeq" id="NP_001011954.1">
    <property type="nucleotide sequence ID" value="NM_001011954.1"/>
</dbReference>
<dbReference type="SMR" id="Q5RKJ2"/>
<dbReference type="FunCoup" id="Q5RKJ2">
    <property type="interactions" value="522"/>
</dbReference>
<dbReference type="STRING" id="10116.ENSRNOP00000012942"/>
<dbReference type="PhosphoSitePlus" id="Q5RKJ2"/>
<dbReference type="PaxDb" id="10116-ENSRNOP00000012942"/>
<dbReference type="Ensembl" id="ENSRNOT00000012942.7">
    <property type="protein sequence ID" value="ENSRNOP00000012942.4"/>
    <property type="gene ID" value="ENSRNOG00000009620.7"/>
</dbReference>
<dbReference type="GeneID" id="295669"/>
<dbReference type="KEGG" id="rno:295669"/>
<dbReference type="UCSC" id="RGD:1305740">
    <property type="organism name" value="rat"/>
</dbReference>
<dbReference type="AGR" id="RGD:1305740"/>
<dbReference type="CTD" id="79901"/>
<dbReference type="RGD" id="1305740">
    <property type="gene designation" value="Cybrd1"/>
</dbReference>
<dbReference type="eggNOG" id="KOG1619">
    <property type="taxonomic scope" value="Eukaryota"/>
</dbReference>
<dbReference type="GeneTree" id="ENSGT00950000183197"/>
<dbReference type="HOGENOM" id="CLU_069712_1_2_1"/>
<dbReference type="InParanoid" id="Q5RKJ2"/>
<dbReference type="OMA" id="NWHPVLA"/>
<dbReference type="OrthoDB" id="907479at2759"/>
<dbReference type="PhylomeDB" id="Q5RKJ2"/>
<dbReference type="TreeFam" id="TF314222"/>
<dbReference type="Reactome" id="R-RNO-917937">
    <property type="pathway name" value="Iron uptake and transport"/>
</dbReference>
<dbReference type="PRO" id="PR:Q5RKJ2"/>
<dbReference type="Proteomes" id="UP000002494">
    <property type="component" value="Chromosome 3"/>
</dbReference>
<dbReference type="Bgee" id="ENSRNOG00000009620">
    <property type="expression patterns" value="Expressed in duodenum and 18 other cell types or tissues"/>
</dbReference>
<dbReference type="GO" id="GO:0016324">
    <property type="term" value="C:apical plasma membrane"/>
    <property type="evidence" value="ECO:0000250"/>
    <property type="project" value="UniProtKB"/>
</dbReference>
<dbReference type="GO" id="GO:0031526">
    <property type="term" value="C:brush border membrane"/>
    <property type="evidence" value="ECO:0000250"/>
    <property type="project" value="UniProtKB"/>
</dbReference>
<dbReference type="GO" id="GO:0005765">
    <property type="term" value="C:lysosomal membrane"/>
    <property type="evidence" value="ECO:0000318"/>
    <property type="project" value="GO_Central"/>
</dbReference>
<dbReference type="GO" id="GO:0016020">
    <property type="term" value="C:membrane"/>
    <property type="evidence" value="ECO:0000250"/>
    <property type="project" value="UniProtKB"/>
</dbReference>
<dbReference type="GO" id="GO:0005886">
    <property type="term" value="C:plasma membrane"/>
    <property type="evidence" value="ECO:0000266"/>
    <property type="project" value="RGD"/>
</dbReference>
<dbReference type="GO" id="GO:0042802">
    <property type="term" value="F:identical protein binding"/>
    <property type="evidence" value="ECO:0000250"/>
    <property type="project" value="UniProtKB"/>
</dbReference>
<dbReference type="GO" id="GO:0046872">
    <property type="term" value="F:metal ion binding"/>
    <property type="evidence" value="ECO:0007669"/>
    <property type="project" value="UniProtKB-KW"/>
</dbReference>
<dbReference type="GO" id="GO:0016491">
    <property type="term" value="F:oxidoreductase activity"/>
    <property type="evidence" value="ECO:0000318"/>
    <property type="project" value="GO_Central"/>
</dbReference>
<dbReference type="GO" id="GO:0016722">
    <property type="term" value="F:oxidoreductase activity, acting on metal ions"/>
    <property type="evidence" value="ECO:0000266"/>
    <property type="project" value="RGD"/>
</dbReference>
<dbReference type="GO" id="GO:0140571">
    <property type="term" value="F:transmembrane ascorbate ferrireductase activity"/>
    <property type="evidence" value="ECO:0000250"/>
    <property type="project" value="UniProtKB"/>
</dbReference>
<dbReference type="GO" id="GO:0140575">
    <property type="term" value="F:transmembrane monodehydroascorbate reductase activity"/>
    <property type="evidence" value="ECO:0000250"/>
    <property type="project" value="UniProtKB"/>
</dbReference>
<dbReference type="GO" id="GO:0140576">
    <property type="term" value="P:ascorbate homeostasis"/>
    <property type="evidence" value="ECO:0000250"/>
    <property type="project" value="UniProtKB"/>
</dbReference>
<dbReference type="GO" id="GO:0006879">
    <property type="term" value="P:intracellular iron ion homeostasis"/>
    <property type="evidence" value="ECO:0000266"/>
    <property type="project" value="RGD"/>
</dbReference>
<dbReference type="GO" id="GO:0060586">
    <property type="term" value="P:multicellular organismal-level iron ion homeostasis"/>
    <property type="evidence" value="ECO:0000250"/>
    <property type="project" value="UniProtKB"/>
</dbReference>
<dbReference type="GO" id="GO:0010039">
    <property type="term" value="P:response to iron ion"/>
    <property type="evidence" value="ECO:0000266"/>
    <property type="project" value="RGD"/>
</dbReference>
<dbReference type="FunFam" id="1.20.120.1770:FF:000001">
    <property type="entry name" value="Cytochrome b reductase 1"/>
    <property type="match status" value="1"/>
</dbReference>
<dbReference type="Gene3D" id="1.20.120.1770">
    <property type="match status" value="1"/>
</dbReference>
<dbReference type="InterPro" id="IPR043205">
    <property type="entry name" value="CYB561/CYBRD1-like"/>
</dbReference>
<dbReference type="InterPro" id="IPR006593">
    <property type="entry name" value="Cyt_b561/ferric_Rdtase_TM"/>
</dbReference>
<dbReference type="PANTHER" id="PTHR10106">
    <property type="entry name" value="CYTOCHROME B561-RELATED"/>
    <property type="match status" value="1"/>
</dbReference>
<dbReference type="PANTHER" id="PTHR10106:SF12">
    <property type="entry name" value="PLASMA MEMBRANE ASCORBATE-DEPENDENT REDUCTASE CYBRD1"/>
    <property type="match status" value="1"/>
</dbReference>
<dbReference type="Pfam" id="PF03188">
    <property type="entry name" value="Cytochrom_B561"/>
    <property type="match status" value="1"/>
</dbReference>
<dbReference type="SMART" id="SM00665">
    <property type="entry name" value="B561"/>
    <property type="match status" value="1"/>
</dbReference>
<dbReference type="PROSITE" id="PS50939">
    <property type="entry name" value="CYTOCHROME_B561"/>
    <property type="match status" value="1"/>
</dbReference>